<feature type="chain" id="PRO_0000164620" description="D-aminoacyl-tRNA deacylase">
    <location>
        <begin position="1"/>
        <end position="146"/>
    </location>
</feature>
<feature type="short sequence motif" description="Gly-cisPro motif, important for rejection of L-amino acids" evidence="1">
    <location>
        <begin position="138"/>
        <end position="139"/>
    </location>
</feature>
<organism>
    <name type="scientific">Xanthomonas axonopodis pv. citri (strain 306)</name>
    <dbReference type="NCBI Taxonomy" id="190486"/>
    <lineage>
        <taxon>Bacteria</taxon>
        <taxon>Pseudomonadati</taxon>
        <taxon>Pseudomonadota</taxon>
        <taxon>Gammaproteobacteria</taxon>
        <taxon>Lysobacterales</taxon>
        <taxon>Lysobacteraceae</taxon>
        <taxon>Xanthomonas</taxon>
    </lineage>
</organism>
<reference key="1">
    <citation type="journal article" date="2002" name="Nature">
        <title>Comparison of the genomes of two Xanthomonas pathogens with differing host specificities.</title>
        <authorList>
            <person name="da Silva A.C.R."/>
            <person name="Ferro J.A."/>
            <person name="Reinach F.C."/>
            <person name="Farah C.S."/>
            <person name="Furlan L.R."/>
            <person name="Quaggio R.B."/>
            <person name="Monteiro-Vitorello C.B."/>
            <person name="Van Sluys M.A."/>
            <person name="Almeida N.F. Jr."/>
            <person name="Alves L.M.C."/>
            <person name="do Amaral A.M."/>
            <person name="Bertolini M.C."/>
            <person name="Camargo L.E.A."/>
            <person name="Camarotte G."/>
            <person name="Cannavan F."/>
            <person name="Cardozo J."/>
            <person name="Chambergo F."/>
            <person name="Ciapina L.P."/>
            <person name="Cicarelli R.M.B."/>
            <person name="Coutinho L.L."/>
            <person name="Cursino-Santos J.R."/>
            <person name="El-Dorry H."/>
            <person name="Faria J.B."/>
            <person name="Ferreira A.J.S."/>
            <person name="Ferreira R.C.C."/>
            <person name="Ferro M.I.T."/>
            <person name="Formighieri E.F."/>
            <person name="Franco M.C."/>
            <person name="Greggio C.C."/>
            <person name="Gruber A."/>
            <person name="Katsuyama A.M."/>
            <person name="Kishi L.T."/>
            <person name="Leite R.P."/>
            <person name="Lemos E.G.M."/>
            <person name="Lemos M.V.F."/>
            <person name="Locali E.C."/>
            <person name="Machado M.A."/>
            <person name="Madeira A.M.B.N."/>
            <person name="Martinez-Rossi N.M."/>
            <person name="Martins E.C."/>
            <person name="Meidanis J."/>
            <person name="Menck C.F.M."/>
            <person name="Miyaki C.Y."/>
            <person name="Moon D.H."/>
            <person name="Moreira L.M."/>
            <person name="Novo M.T.M."/>
            <person name="Okura V.K."/>
            <person name="Oliveira M.C."/>
            <person name="Oliveira V.R."/>
            <person name="Pereira H.A."/>
            <person name="Rossi A."/>
            <person name="Sena J.A.D."/>
            <person name="Silva C."/>
            <person name="de Souza R.F."/>
            <person name="Spinola L.A.F."/>
            <person name="Takita M.A."/>
            <person name="Tamura R.E."/>
            <person name="Teixeira E.C."/>
            <person name="Tezza R.I.D."/>
            <person name="Trindade dos Santos M."/>
            <person name="Truffi D."/>
            <person name="Tsai S.M."/>
            <person name="White F.F."/>
            <person name="Setubal J.C."/>
            <person name="Kitajima J.P."/>
        </authorList>
    </citation>
    <scope>NUCLEOTIDE SEQUENCE [LARGE SCALE GENOMIC DNA]</scope>
    <source>
        <strain>306</strain>
    </source>
</reference>
<accession>Q8PG32</accession>
<proteinExistence type="inferred from homology"/>
<keyword id="KW-0963">Cytoplasm</keyword>
<keyword id="KW-0378">Hydrolase</keyword>
<keyword id="KW-0694">RNA-binding</keyword>
<keyword id="KW-0820">tRNA-binding</keyword>
<sequence length="146" mass="15440">MLALIQRVTRASVTVDDQIVGQIGPGLLALIGVEPGDSDAQIRRLAERLLSYRVFGDDAGKMNRSLADTGGGLLLVSQFTLAADTSSGNRPGFSTAAPPLEAEPAFNRLAAICREKHRGGVETGRFGAHMVVDLVNDGPVTFLLRP</sequence>
<evidence type="ECO:0000255" key="1">
    <source>
        <dbReference type="HAMAP-Rule" id="MF_00518"/>
    </source>
</evidence>
<name>DTD_XANAC</name>
<protein>
    <recommendedName>
        <fullName evidence="1">D-aminoacyl-tRNA deacylase</fullName>
        <shortName evidence="1">DTD</shortName>
        <ecNumber evidence="1">3.1.1.96</ecNumber>
    </recommendedName>
    <alternativeName>
        <fullName evidence="1">Gly-tRNA(Ala) deacylase</fullName>
    </alternativeName>
</protein>
<dbReference type="EC" id="3.1.1.96" evidence="1"/>
<dbReference type="EMBL" id="AE008923">
    <property type="protein sequence ID" value="AAM38631.1"/>
    <property type="molecule type" value="Genomic_DNA"/>
</dbReference>
<dbReference type="RefSeq" id="WP_005927386.1">
    <property type="nucleotide sequence ID" value="NC_003919.1"/>
</dbReference>
<dbReference type="SMR" id="Q8PG32"/>
<dbReference type="GeneID" id="66912810"/>
<dbReference type="KEGG" id="xac:XAC3789"/>
<dbReference type="eggNOG" id="COG1490">
    <property type="taxonomic scope" value="Bacteria"/>
</dbReference>
<dbReference type="HOGENOM" id="CLU_076901_1_1_6"/>
<dbReference type="Proteomes" id="UP000000576">
    <property type="component" value="Chromosome"/>
</dbReference>
<dbReference type="GO" id="GO:0005737">
    <property type="term" value="C:cytoplasm"/>
    <property type="evidence" value="ECO:0007669"/>
    <property type="project" value="UniProtKB-SubCell"/>
</dbReference>
<dbReference type="GO" id="GO:0051500">
    <property type="term" value="F:D-tyrosyl-tRNA(Tyr) deacylase activity"/>
    <property type="evidence" value="ECO:0007669"/>
    <property type="project" value="TreeGrafter"/>
</dbReference>
<dbReference type="GO" id="GO:0106026">
    <property type="term" value="F:Gly-tRNA(Ala) deacylase activity"/>
    <property type="evidence" value="ECO:0007669"/>
    <property type="project" value="UniProtKB-UniRule"/>
</dbReference>
<dbReference type="GO" id="GO:0043908">
    <property type="term" value="F:Ser(Gly)-tRNA(Ala) hydrolase activity"/>
    <property type="evidence" value="ECO:0007669"/>
    <property type="project" value="UniProtKB-UniRule"/>
</dbReference>
<dbReference type="GO" id="GO:0000049">
    <property type="term" value="F:tRNA binding"/>
    <property type="evidence" value="ECO:0007669"/>
    <property type="project" value="UniProtKB-UniRule"/>
</dbReference>
<dbReference type="GO" id="GO:0019478">
    <property type="term" value="P:D-amino acid catabolic process"/>
    <property type="evidence" value="ECO:0007669"/>
    <property type="project" value="UniProtKB-UniRule"/>
</dbReference>
<dbReference type="CDD" id="cd00563">
    <property type="entry name" value="Dtyr_deacylase"/>
    <property type="match status" value="1"/>
</dbReference>
<dbReference type="FunFam" id="3.50.80.10:FF:000001">
    <property type="entry name" value="D-aminoacyl-tRNA deacylase"/>
    <property type="match status" value="1"/>
</dbReference>
<dbReference type="Gene3D" id="3.50.80.10">
    <property type="entry name" value="D-tyrosyl-tRNA(Tyr) deacylase"/>
    <property type="match status" value="1"/>
</dbReference>
<dbReference type="HAMAP" id="MF_00518">
    <property type="entry name" value="Deacylase_Dtd"/>
    <property type="match status" value="1"/>
</dbReference>
<dbReference type="InterPro" id="IPR003732">
    <property type="entry name" value="Daa-tRNA_deacyls_DTD"/>
</dbReference>
<dbReference type="InterPro" id="IPR023509">
    <property type="entry name" value="DTD-like_sf"/>
</dbReference>
<dbReference type="NCBIfam" id="TIGR00256">
    <property type="entry name" value="D-aminoacyl-tRNA deacylase"/>
    <property type="match status" value="1"/>
</dbReference>
<dbReference type="PANTHER" id="PTHR10472:SF5">
    <property type="entry name" value="D-AMINOACYL-TRNA DEACYLASE 1"/>
    <property type="match status" value="1"/>
</dbReference>
<dbReference type="PANTHER" id="PTHR10472">
    <property type="entry name" value="D-TYROSYL-TRNA TYR DEACYLASE"/>
    <property type="match status" value="1"/>
</dbReference>
<dbReference type="Pfam" id="PF02580">
    <property type="entry name" value="Tyr_Deacylase"/>
    <property type="match status" value="1"/>
</dbReference>
<dbReference type="SUPFAM" id="SSF69500">
    <property type="entry name" value="DTD-like"/>
    <property type="match status" value="1"/>
</dbReference>
<gene>
    <name evidence="1" type="primary">dtd</name>
    <name type="ordered locus">XAC3789</name>
</gene>
<comment type="function">
    <text evidence="1">An aminoacyl-tRNA editing enzyme that deacylates mischarged D-aminoacyl-tRNAs. Also deacylates mischarged glycyl-tRNA(Ala), protecting cells against glycine mischarging by AlaRS. Acts via tRNA-based rather than protein-based catalysis; rejects L-amino acids rather than detecting D-amino acids in the active site. By recycling D-aminoacyl-tRNA to D-amino acids and free tRNA molecules, this enzyme counteracts the toxicity associated with the formation of D-aminoacyl-tRNA entities in vivo and helps enforce protein L-homochirality.</text>
</comment>
<comment type="catalytic activity">
    <reaction evidence="1">
        <text>glycyl-tRNA(Ala) + H2O = tRNA(Ala) + glycine + H(+)</text>
        <dbReference type="Rhea" id="RHEA:53744"/>
        <dbReference type="Rhea" id="RHEA-COMP:9657"/>
        <dbReference type="Rhea" id="RHEA-COMP:13640"/>
        <dbReference type="ChEBI" id="CHEBI:15377"/>
        <dbReference type="ChEBI" id="CHEBI:15378"/>
        <dbReference type="ChEBI" id="CHEBI:57305"/>
        <dbReference type="ChEBI" id="CHEBI:78442"/>
        <dbReference type="ChEBI" id="CHEBI:78522"/>
        <dbReference type="EC" id="3.1.1.96"/>
    </reaction>
</comment>
<comment type="catalytic activity">
    <reaction evidence="1">
        <text>a D-aminoacyl-tRNA + H2O = a tRNA + a D-alpha-amino acid + H(+)</text>
        <dbReference type="Rhea" id="RHEA:13953"/>
        <dbReference type="Rhea" id="RHEA-COMP:10123"/>
        <dbReference type="Rhea" id="RHEA-COMP:10124"/>
        <dbReference type="ChEBI" id="CHEBI:15377"/>
        <dbReference type="ChEBI" id="CHEBI:15378"/>
        <dbReference type="ChEBI" id="CHEBI:59871"/>
        <dbReference type="ChEBI" id="CHEBI:78442"/>
        <dbReference type="ChEBI" id="CHEBI:79333"/>
        <dbReference type="EC" id="3.1.1.96"/>
    </reaction>
</comment>
<comment type="subunit">
    <text evidence="1">Homodimer.</text>
</comment>
<comment type="subcellular location">
    <subcellularLocation>
        <location evidence="1">Cytoplasm</location>
    </subcellularLocation>
</comment>
<comment type="domain">
    <text evidence="1">A Gly-cisPro motif from one monomer fits into the active site of the other monomer to allow specific chiral rejection of L-amino acids.</text>
</comment>
<comment type="similarity">
    <text evidence="1">Belongs to the DTD family.</text>
</comment>